<keyword id="KW-0007">Acetylation</keyword>
<keyword id="KW-0053">Apoptosis</keyword>
<keyword id="KW-0067">ATP-binding</keyword>
<keyword id="KW-0175">Coiled coil</keyword>
<keyword id="KW-0963">Cytoplasm</keyword>
<keyword id="KW-0418">Kinase</keyword>
<keyword id="KW-0460">Magnesium</keyword>
<keyword id="KW-0479">Metal-binding</keyword>
<keyword id="KW-0547">Nucleotide-binding</keyword>
<keyword id="KW-0539">Nucleus</keyword>
<keyword id="KW-0597">Phosphoprotein</keyword>
<keyword id="KW-0723">Serine/threonine-protein kinase</keyword>
<keyword id="KW-0808">Transferase</keyword>
<comment type="function">
    <text evidence="2 3">Stress-activated, pro-apoptotic kinase which, following caspase-cleavage, enters the nucleus and induces chromatin condensation followed by internucleosomal DNA fragmentation. Key component of the Hippo signaling pathway which plays a pivotal role in organ size control and tumor suppression by restricting proliferation and promoting apoptosis. The core of this pathway is composed of a kinase cascade wherein STK3/MST2 and STK4/MST1, in complex with its regulatory protein SAV1, phosphorylates and activates LATS1/2 in complex with its regulatory protein MOB1, which in turn phosphorylates and inactivates YAP1 oncoprotein and WWTR1/TAZ. Phosphorylation of YAP1 by LATS2 inhibits its translocation into the nucleus to regulate cellular genes important for cell proliferation, cell death, and cell migration. STK3/MST2 and STK4/MST1 are required to repress proliferation of mature hepatocytes, to prevent activation of facultative adult liver stem cells (oval cells), and to inhibit tumor formation. Phosphorylates 'Ser-14' of histone H2B (H2BS14ph) during apoptosis. Phosphorylates FOXO3 upon oxidative stress, which results in its nuclear translocation and cell death initiation. Phosphorylates MOBKL1A, MOBKL1B and RASSF2. Phosphorylates TNNI3 (cardiac Tn-I) and alters its binding affinity to TNNC1 (cardiac Tn-C) and TNNT2 (cardiac Tn-T). Phosphorylates FOXO1 on 'Ser-212' and regulates its activation and stimulates transcription of PMAIP1 in a FOXO1-dependent manner. Phosphorylates SIRT1 and inhibits SIRT1-mediated p53/TP53 deacetylation, thereby promoting p53/TP53 dependent transcription and apoptosis upon DNA damage. Acts as an inhibitor of PKB/AKT1. Phosphorylates AR on 'Ser-650' and suppresses its activity by intersecting with PKB/AKT1 signaling and antagonizing formation of AR-chromatin complexes.</text>
</comment>
<comment type="catalytic activity">
    <reaction evidence="2">
        <text>L-seryl-[protein] + ATP = O-phospho-L-seryl-[protein] + ADP + H(+)</text>
        <dbReference type="Rhea" id="RHEA:17989"/>
        <dbReference type="Rhea" id="RHEA-COMP:9863"/>
        <dbReference type="Rhea" id="RHEA-COMP:11604"/>
        <dbReference type="ChEBI" id="CHEBI:15378"/>
        <dbReference type="ChEBI" id="CHEBI:29999"/>
        <dbReference type="ChEBI" id="CHEBI:30616"/>
        <dbReference type="ChEBI" id="CHEBI:83421"/>
        <dbReference type="ChEBI" id="CHEBI:456216"/>
        <dbReference type="EC" id="2.7.11.1"/>
    </reaction>
    <physiologicalReaction direction="left-to-right" evidence="2">
        <dbReference type="Rhea" id="RHEA:17990"/>
    </physiologicalReaction>
</comment>
<comment type="catalytic activity">
    <reaction evidence="2">
        <text>L-threonyl-[protein] + ATP = O-phospho-L-threonyl-[protein] + ADP + H(+)</text>
        <dbReference type="Rhea" id="RHEA:46608"/>
        <dbReference type="Rhea" id="RHEA-COMP:11060"/>
        <dbReference type="Rhea" id="RHEA-COMP:11605"/>
        <dbReference type="ChEBI" id="CHEBI:15378"/>
        <dbReference type="ChEBI" id="CHEBI:30013"/>
        <dbReference type="ChEBI" id="CHEBI:30616"/>
        <dbReference type="ChEBI" id="CHEBI:61977"/>
        <dbReference type="ChEBI" id="CHEBI:456216"/>
        <dbReference type="EC" id="2.7.11.1"/>
    </reaction>
    <physiologicalReaction direction="left-to-right" evidence="2">
        <dbReference type="Rhea" id="RHEA:46609"/>
    </physiologicalReaction>
</comment>
<comment type="cofactor">
    <cofactor evidence="1">
        <name>Mg(2+)</name>
        <dbReference type="ChEBI" id="CHEBI:18420"/>
    </cofactor>
</comment>
<comment type="activity regulation">
    <text evidence="1">Inhibited by the C-terminal non-catalytic region. Activated by caspase-cleavage. Full activation also requires homodimerization and autophosphorylation of Thr-183. Activated by RASSF1 which acts by preventing its dephosphorylation (By similarity).</text>
</comment>
<comment type="subunit">
    <text evidence="2">Homodimer; mediated via the coiled-coil region. Interacts with NORE1, which inhibits autoactivation. Interacts with and stabilizes SAV1. Interacts with RASSF1. Interacts with FOXO3. Interacts with RASSF2 (via SARAH domain). Interacts with AR, PKB/AKT1, TNNI3 and SIRT1. Interacts with DLG5 (via PDZ domain 3). Interacts with MARK3 and SCRIB in the presence of DLG5.</text>
</comment>
<comment type="subcellular location">
    <subcellularLocation>
        <location evidence="1">Cytoplasm</location>
    </subcellularLocation>
    <subcellularLocation>
        <location evidence="1">Nucleus</location>
    </subcellularLocation>
    <text evidence="1">The caspase-cleaved form cycles between the nucleus and cytoplasm.</text>
</comment>
<comment type="PTM">
    <text evidence="2">Autophosphorylated on serine and threonine residues. Phosphorylation at Thr-387 by PKB/AKT1, leads to inhibition of its: kinase activity, nuclear translocation and autophosphorylation at Thr-183. It also diminishes its cleavage by caspases and its ability to phosphorylate FOXO3 (By similarity).</text>
</comment>
<comment type="PTM">
    <text evidence="1">Proteolytically cleaved by caspase-3 during apoptosis at Asp-326 and Asp-349 resulting in a 37 kDa or a 39 kDa subunit respectively. The 39 kDa subunit is further cleaved into the 37 kDa form. Proteolytic cleavage results in kinase activation and nuclear translocation of the truncated form (MST1/N). It is less likely that cleavage at Asp-349 is a prerequisite for activation as this site is not conserved in the murine ortholog (By similarity).</text>
</comment>
<comment type="similarity">
    <text evidence="8">Belongs to the protein kinase superfamily. STE Ser/Thr protein kinase family. STE20 subfamily.</text>
</comment>
<reference key="1">
    <citation type="journal article" date="2007" name="Genome Res.">
        <title>Comparative sequence analyses reveal rapid and divergent evolutionary changes of the WFDC locus in the primate lineage.</title>
        <authorList>
            <consortium name="NISC comparative sequencing program"/>
            <person name="Hurle B."/>
            <person name="Swanson W."/>
            <person name="Green E.D."/>
        </authorList>
    </citation>
    <scope>NUCLEOTIDE SEQUENCE [GENOMIC DNA]</scope>
</reference>
<sequence length="487" mass="55632">METVQLRNPPRRQLKKLDEDSLTKQPEEVFDVLEKLGEGSYGSVYKAIHKETGQIVAIKQVPVESDLQEIIKEISIMQQCDSPHVVKYYGSYFKNTDLWIVMEYCGAGSVSDIIRLRNKTLTEDEIATILQSTLKGLEYLHFMRKIHRDIKAGNILLNTEGHAKLADFGVAGQLTDTMAKRNTVIGTPFWMAPEVIQEIGYNCVADIWSLGITAIEMAEGKPPYADIHPMRAIFMIPTNPPPTFRKPELWSDNFTDFVKQCLVKSPEQRATATQLLQHPFVKSAKGVSILRDLINEAMDVKLKRQESQQREVDQDDEENSEEDEMDSGTMVRAVGDEMGTVRVASTMTDGANTMIEHDDTLPSQLGTMVINTEDEEEEGTMKRRDETMQPAKPSFLEYFEQKEKENQINSFGKSVPGPLKNSSDWKIPQDGDYEFLKSWTVEDLQKRLLALDPMMEQEIEEIRQKYQSKRQPILDAIEAKKRRQQNF</sequence>
<proteinExistence type="inferred from homology"/>
<dbReference type="EC" id="2.7.11.1"/>
<dbReference type="EMBL" id="DP000048">
    <property type="protein sequence ID" value="ABO53016.1"/>
    <property type="molecule type" value="Genomic_DNA"/>
</dbReference>
<dbReference type="SMR" id="A4K2Y1"/>
<dbReference type="GO" id="GO:0005737">
    <property type="term" value="C:cytoplasm"/>
    <property type="evidence" value="ECO:0000250"/>
    <property type="project" value="UniProtKB"/>
</dbReference>
<dbReference type="GO" id="GO:0005634">
    <property type="term" value="C:nucleus"/>
    <property type="evidence" value="ECO:0000250"/>
    <property type="project" value="UniProtKB"/>
</dbReference>
<dbReference type="GO" id="GO:0005524">
    <property type="term" value="F:ATP binding"/>
    <property type="evidence" value="ECO:0007669"/>
    <property type="project" value="UniProtKB-KW"/>
</dbReference>
<dbReference type="GO" id="GO:0046872">
    <property type="term" value="F:metal ion binding"/>
    <property type="evidence" value="ECO:0007669"/>
    <property type="project" value="UniProtKB-KW"/>
</dbReference>
<dbReference type="GO" id="GO:0106310">
    <property type="term" value="F:protein serine kinase activity"/>
    <property type="evidence" value="ECO:0007669"/>
    <property type="project" value="RHEA"/>
</dbReference>
<dbReference type="GO" id="GO:0004674">
    <property type="term" value="F:protein serine/threonine kinase activity"/>
    <property type="evidence" value="ECO:0000250"/>
    <property type="project" value="UniProtKB"/>
</dbReference>
<dbReference type="GO" id="GO:0006915">
    <property type="term" value="P:apoptotic process"/>
    <property type="evidence" value="ECO:0000250"/>
    <property type="project" value="UniProtKB"/>
</dbReference>
<dbReference type="GO" id="GO:0035329">
    <property type="term" value="P:hippo signaling"/>
    <property type="evidence" value="ECO:0000250"/>
    <property type="project" value="UniProtKB"/>
</dbReference>
<dbReference type="GO" id="GO:0051262">
    <property type="term" value="P:protein tetramerization"/>
    <property type="evidence" value="ECO:0007669"/>
    <property type="project" value="InterPro"/>
</dbReference>
<dbReference type="CDD" id="cd21887">
    <property type="entry name" value="SARAH_MST1"/>
    <property type="match status" value="1"/>
</dbReference>
<dbReference type="CDD" id="cd06612">
    <property type="entry name" value="STKc_MST1_2"/>
    <property type="match status" value="1"/>
</dbReference>
<dbReference type="FunFam" id="1.10.510.10:FF:000075">
    <property type="entry name" value="Serine/threonine-protein kinase 3"/>
    <property type="match status" value="1"/>
</dbReference>
<dbReference type="FunFam" id="3.30.200.20:FF:000410">
    <property type="entry name" value="Serine/threonine-protein kinase 3"/>
    <property type="match status" value="1"/>
</dbReference>
<dbReference type="FunFam" id="4.10.170.10:FF:000002">
    <property type="entry name" value="serine/threonine-protein kinase 3"/>
    <property type="match status" value="1"/>
</dbReference>
<dbReference type="FunFam" id="1.10.287.4270:FF:000004">
    <property type="entry name" value="Serine/threonine-protein kinase 3/4"/>
    <property type="match status" value="1"/>
</dbReference>
<dbReference type="FunFam" id="1.10.287.4270:FF:000002">
    <property type="entry name" value="Serine/threonine-protein kinase 4"/>
    <property type="match status" value="1"/>
</dbReference>
<dbReference type="Gene3D" id="1.10.287.4270">
    <property type="match status" value="1"/>
</dbReference>
<dbReference type="Gene3D" id="4.10.170.10">
    <property type="entry name" value="p53-like tetramerisation domain"/>
    <property type="match status" value="1"/>
</dbReference>
<dbReference type="Gene3D" id="1.10.510.10">
    <property type="entry name" value="Transferase(Phosphotransferase) domain 1"/>
    <property type="match status" value="1"/>
</dbReference>
<dbReference type="InterPro" id="IPR011009">
    <property type="entry name" value="Kinase-like_dom_sf"/>
</dbReference>
<dbReference type="InterPro" id="IPR024205">
    <property type="entry name" value="Mst1_2_SARAH_domain"/>
</dbReference>
<dbReference type="InterPro" id="IPR036674">
    <property type="entry name" value="p53_tetramer_sf"/>
</dbReference>
<dbReference type="InterPro" id="IPR000719">
    <property type="entry name" value="Prot_kinase_dom"/>
</dbReference>
<dbReference type="InterPro" id="IPR017441">
    <property type="entry name" value="Protein_kinase_ATP_BS"/>
</dbReference>
<dbReference type="InterPro" id="IPR011524">
    <property type="entry name" value="SARAH_dom"/>
</dbReference>
<dbReference type="InterPro" id="IPR050629">
    <property type="entry name" value="STE20/SPS1-PAK"/>
</dbReference>
<dbReference type="PANTHER" id="PTHR48012:SF2">
    <property type="entry name" value="STERILE20-LIKE KINASE, ISOFORM B"/>
    <property type="match status" value="1"/>
</dbReference>
<dbReference type="PANTHER" id="PTHR48012">
    <property type="entry name" value="STERILE20-LIKE KINASE, ISOFORM B-RELATED"/>
    <property type="match status" value="1"/>
</dbReference>
<dbReference type="Pfam" id="PF11629">
    <property type="entry name" value="Mst1_SARAH"/>
    <property type="match status" value="1"/>
</dbReference>
<dbReference type="Pfam" id="PF00069">
    <property type="entry name" value="Pkinase"/>
    <property type="match status" value="1"/>
</dbReference>
<dbReference type="SMART" id="SM00220">
    <property type="entry name" value="S_TKc"/>
    <property type="match status" value="1"/>
</dbReference>
<dbReference type="SUPFAM" id="SSF56112">
    <property type="entry name" value="Protein kinase-like (PK-like)"/>
    <property type="match status" value="1"/>
</dbReference>
<dbReference type="PROSITE" id="PS00107">
    <property type="entry name" value="PROTEIN_KINASE_ATP"/>
    <property type="match status" value="1"/>
</dbReference>
<dbReference type="PROSITE" id="PS50011">
    <property type="entry name" value="PROTEIN_KINASE_DOM"/>
    <property type="match status" value="1"/>
</dbReference>
<dbReference type="PROSITE" id="PS50951">
    <property type="entry name" value="SARAH"/>
    <property type="match status" value="1"/>
</dbReference>
<organism>
    <name type="scientific">Chlorocebus aethiops</name>
    <name type="common">Green monkey</name>
    <name type="synonym">Cercopithecus aethiops</name>
    <dbReference type="NCBI Taxonomy" id="9534"/>
    <lineage>
        <taxon>Eukaryota</taxon>
        <taxon>Metazoa</taxon>
        <taxon>Chordata</taxon>
        <taxon>Craniata</taxon>
        <taxon>Vertebrata</taxon>
        <taxon>Euteleostomi</taxon>
        <taxon>Mammalia</taxon>
        <taxon>Eutheria</taxon>
        <taxon>Euarchontoglires</taxon>
        <taxon>Primates</taxon>
        <taxon>Haplorrhini</taxon>
        <taxon>Catarrhini</taxon>
        <taxon>Cercopithecidae</taxon>
        <taxon>Cercopithecinae</taxon>
        <taxon>Chlorocebus</taxon>
    </lineage>
</organism>
<feature type="chain" id="PRO_0000289628" description="Serine/threonine-protein kinase 4">
    <location>
        <begin position="1"/>
        <end position="487"/>
    </location>
</feature>
<feature type="chain" id="PRO_0000413731" description="Serine/threonine-protein kinase 4 37kDa subunit" evidence="1">
    <location>
        <begin position="1"/>
        <end position="326"/>
    </location>
</feature>
<feature type="chain" id="PRO_0000413732" description="Serine/threonine-protein kinase 4 18kDa subunit" evidence="1">
    <location>
        <begin position="327"/>
        <end position="487"/>
    </location>
</feature>
<feature type="domain" description="Protein kinase" evidence="5">
    <location>
        <begin position="30"/>
        <end position="281"/>
    </location>
</feature>
<feature type="domain" description="SARAH" evidence="6">
    <location>
        <begin position="433"/>
        <end position="480"/>
    </location>
</feature>
<feature type="region of interest" description="Disordered" evidence="7">
    <location>
        <begin position="303"/>
        <end position="332"/>
    </location>
</feature>
<feature type="coiled-coil region" evidence="4">
    <location>
        <begin position="290"/>
        <end position="310"/>
    </location>
</feature>
<feature type="compositionally biased region" description="Basic and acidic residues" evidence="7">
    <location>
        <begin position="303"/>
        <end position="312"/>
    </location>
</feature>
<feature type="compositionally biased region" description="Acidic residues" evidence="7">
    <location>
        <begin position="313"/>
        <end position="326"/>
    </location>
</feature>
<feature type="active site" description="Proton acceptor" evidence="5">
    <location>
        <position position="149"/>
    </location>
</feature>
<feature type="binding site" evidence="5">
    <location>
        <begin position="36"/>
        <end position="44"/>
    </location>
    <ligand>
        <name>ATP</name>
        <dbReference type="ChEBI" id="CHEBI:30616"/>
    </ligand>
</feature>
<feature type="binding site" evidence="5">
    <location>
        <position position="59"/>
    </location>
    <ligand>
        <name>ATP</name>
        <dbReference type="ChEBI" id="CHEBI:30616"/>
    </ligand>
</feature>
<feature type="site" description="Cleavage; by caspase-3" evidence="1">
    <location>
        <begin position="326"/>
        <end position="327"/>
    </location>
</feature>
<feature type="site" description="Cleavage; by caspase-3" evidence="1">
    <location>
        <begin position="349"/>
        <end position="350"/>
    </location>
</feature>
<feature type="modified residue" description="N-acetylmethionine" evidence="2">
    <location>
        <position position="1"/>
    </location>
</feature>
<feature type="modified residue" description="Phosphothreonine" evidence="2">
    <location>
        <position position="3"/>
    </location>
</feature>
<feature type="modified residue" description="Phosphothreonine; by autocatalysis" evidence="2">
    <location>
        <position position="183"/>
    </location>
</feature>
<feature type="modified residue" description="Phosphoserine" evidence="2">
    <location>
        <position position="265"/>
    </location>
</feature>
<feature type="modified residue" description="Phosphoserine" evidence="2">
    <location>
        <position position="320"/>
    </location>
</feature>
<feature type="modified residue" description="Phosphothreonine" evidence="2">
    <location>
        <position position="340"/>
    </location>
</feature>
<feature type="modified residue" description="Phosphothreonine" evidence="2">
    <location>
        <position position="367"/>
    </location>
</feature>
<feature type="modified residue" description="Phosphothreonine; by PKB/AKT1" evidence="2">
    <location>
        <position position="387"/>
    </location>
</feature>
<feature type="modified residue" description="Phosphoserine" evidence="2">
    <location>
        <position position="410"/>
    </location>
</feature>
<feature type="modified residue" description="Phosphoserine" evidence="2">
    <location>
        <position position="414"/>
    </location>
</feature>
<feature type="modified residue" description="Phosphotyrosine" evidence="3">
    <location>
        <position position="433"/>
    </location>
</feature>
<protein>
    <recommendedName>
        <fullName>Serine/threonine-protein kinase 4</fullName>
        <ecNumber>2.7.11.1</ecNumber>
    </recommendedName>
    <component>
        <recommendedName>
            <fullName>Serine/threonine-protein kinase 4 37kDa subunit</fullName>
            <shortName>MST1/N</shortName>
        </recommendedName>
    </component>
    <component>
        <recommendedName>
            <fullName>Serine/threonine-protein kinase 4 18kDa subunit</fullName>
            <shortName>MST1/C</shortName>
        </recommendedName>
    </component>
</protein>
<name>STK4_CHLAE</name>
<accession>A4K2Y1</accession>
<gene>
    <name type="primary">STK4</name>
</gene>
<evidence type="ECO:0000250" key="1"/>
<evidence type="ECO:0000250" key="2">
    <source>
        <dbReference type="UniProtKB" id="Q13043"/>
    </source>
</evidence>
<evidence type="ECO:0000250" key="3">
    <source>
        <dbReference type="UniProtKB" id="Q9JI11"/>
    </source>
</evidence>
<evidence type="ECO:0000255" key="4"/>
<evidence type="ECO:0000255" key="5">
    <source>
        <dbReference type="PROSITE-ProRule" id="PRU00159"/>
    </source>
</evidence>
<evidence type="ECO:0000255" key="6">
    <source>
        <dbReference type="PROSITE-ProRule" id="PRU00310"/>
    </source>
</evidence>
<evidence type="ECO:0000256" key="7">
    <source>
        <dbReference type="SAM" id="MobiDB-lite"/>
    </source>
</evidence>
<evidence type="ECO:0000305" key="8"/>